<sequence length="491" mass="53341">MTTALKVKTSSLPGSRLALEVGVPADRCKASYEAAVERLSRSVRLPGFRKGRVPKPVLLQQIGPLRVKASALEDLVDSVLRDAVEQEKVEVLGQPSLSGNFEELLEKFDPAKELVVTLEMDVAPTPTLKSTKGLSAEAESVAYDPARVDELLDQSRRQLATLVPVSDRAAAMGDVAVVSFSGVFSDDKSAIEGGSANGLDVELEEGRMISGFVEGVVGMKPGDKKDVDCQFPDDYPEETCRGRKALFSISLDELKGRELPELDDAFAQQASDKKTLSELREDLENRLKQDAEQRQKNNRHEALLKALVDQLEVELPESLIKEEINSLLQETAAQMAQQGMDVKKLFTPETVQNLAQASRGEATERLQRSLALKALAKAEGISVADKDLEAKIKEVSAGFSDTNKIDPQRLRDAVAEDLLRETLLSWLEENAKLTMVDPASEDKPAKASKAKSSKAKAEKEPAAEGQAKAKPAAKTSKSKTKAAEKLITPID</sequence>
<dbReference type="EC" id="5.2.1.8" evidence="1"/>
<dbReference type="EMBL" id="CT978603">
    <property type="protein sequence ID" value="CAK26970.1"/>
    <property type="molecule type" value="Genomic_DNA"/>
</dbReference>
<dbReference type="SMR" id="A5GQ11"/>
<dbReference type="STRING" id="316278.SynRCC307_0067"/>
<dbReference type="KEGG" id="syr:SynRCC307_0067"/>
<dbReference type="eggNOG" id="COG0544">
    <property type="taxonomic scope" value="Bacteria"/>
</dbReference>
<dbReference type="HOGENOM" id="CLU_033058_3_1_3"/>
<dbReference type="OrthoDB" id="9767721at2"/>
<dbReference type="Proteomes" id="UP000001115">
    <property type="component" value="Chromosome"/>
</dbReference>
<dbReference type="GO" id="GO:0005737">
    <property type="term" value="C:cytoplasm"/>
    <property type="evidence" value="ECO:0007669"/>
    <property type="project" value="UniProtKB-SubCell"/>
</dbReference>
<dbReference type="GO" id="GO:0003755">
    <property type="term" value="F:peptidyl-prolyl cis-trans isomerase activity"/>
    <property type="evidence" value="ECO:0007669"/>
    <property type="project" value="UniProtKB-UniRule"/>
</dbReference>
<dbReference type="GO" id="GO:0044183">
    <property type="term" value="F:protein folding chaperone"/>
    <property type="evidence" value="ECO:0007669"/>
    <property type="project" value="TreeGrafter"/>
</dbReference>
<dbReference type="GO" id="GO:0043022">
    <property type="term" value="F:ribosome binding"/>
    <property type="evidence" value="ECO:0007669"/>
    <property type="project" value="TreeGrafter"/>
</dbReference>
<dbReference type="GO" id="GO:0051083">
    <property type="term" value="P:'de novo' cotranslational protein folding"/>
    <property type="evidence" value="ECO:0007669"/>
    <property type="project" value="TreeGrafter"/>
</dbReference>
<dbReference type="GO" id="GO:0051301">
    <property type="term" value="P:cell division"/>
    <property type="evidence" value="ECO:0007669"/>
    <property type="project" value="UniProtKB-KW"/>
</dbReference>
<dbReference type="GO" id="GO:0061077">
    <property type="term" value="P:chaperone-mediated protein folding"/>
    <property type="evidence" value="ECO:0007669"/>
    <property type="project" value="TreeGrafter"/>
</dbReference>
<dbReference type="GO" id="GO:0015031">
    <property type="term" value="P:protein transport"/>
    <property type="evidence" value="ECO:0007669"/>
    <property type="project" value="UniProtKB-UniRule"/>
</dbReference>
<dbReference type="GO" id="GO:0043335">
    <property type="term" value="P:protein unfolding"/>
    <property type="evidence" value="ECO:0007669"/>
    <property type="project" value="TreeGrafter"/>
</dbReference>
<dbReference type="FunFam" id="3.30.70.1050:FF:000004">
    <property type="entry name" value="Trigger factor"/>
    <property type="match status" value="1"/>
</dbReference>
<dbReference type="Gene3D" id="3.10.50.40">
    <property type="match status" value="1"/>
</dbReference>
<dbReference type="Gene3D" id="3.30.70.1050">
    <property type="entry name" value="Trigger factor ribosome-binding domain"/>
    <property type="match status" value="1"/>
</dbReference>
<dbReference type="Gene3D" id="1.10.3120.10">
    <property type="entry name" value="Trigger factor, C-terminal domain"/>
    <property type="match status" value="1"/>
</dbReference>
<dbReference type="HAMAP" id="MF_00303">
    <property type="entry name" value="Trigger_factor_Tig"/>
    <property type="match status" value="1"/>
</dbReference>
<dbReference type="InterPro" id="IPR046357">
    <property type="entry name" value="PPIase_dom_sf"/>
</dbReference>
<dbReference type="InterPro" id="IPR001179">
    <property type="entry name" value="PPIase_FKBP_dom"/>
</dbReference>
<dbReference type="InterPro" id="IPR005215">
    <property type="entry name" value="Trig_fac"/>
</dbReference>
<dbReference type="InterPro" id="IPR008880">
    <property type="entry name" value="Trigger_fac_C"/>
</dbReference>
<dbReference type="InterPro" id="IPR037041">
    <property type="entry name" value="Trigger_fac_C_sf"/>
</dbReference>
<dbReference type="InterPro" id="IPR008881">
    <property type="entry name" value="Trigger_fac_ribosome-bd_bac"/>
</dbReference>
<dbReference type="InterPro" id="IPR036611">
    <property type="entry name" value="Trigger_fac_ribosome-bd_sf"/>
</dbReference>
<dbReference type="InterPro" id="IPR027304">
    <property type="entry name" value="Trigger_fact/SurA_dom_sf"/>
</dbReference>
<dbReference type="NCBIfam" id="TIGR00115">
    <property type="entry name" value="tig"/>
    <property type="match status" value="1"/>
</dbReference>
<dbReference type="PANTHER" id="PTHR30560">
    <property type="entry name" value="TRIGGER FACTOR CHAPERONE AND PEPTIDYL-PROLYL CIS/TRANS ISOMERASE"/>
    <property type="match status" value="1"/>
</dbReference>
<dbReference type="PANTHER" id="PTHR30560:SF3">
    <property type="entry name" value="TRIGGER FACTOR-LIKE PROTEIN TIG, CHLOROPLASTIC"/>
    <property type="match status" value="1"/>
</dbReference>
<dbReference type="Pfam" id="PF00254">
    <property type="entry name" value="FKBP_C"/>
    <property type="match status" value="1"/>
</dbReference>
<dbReference type="Pfam" id="PF05698">
    <property type="entry name" value="Trigger_C"/>
    <property type="match status" value="1"/>
</dbReference>
<dbReference type="Pfam" id="PF05697">
    <property type="entry name" value="Trigger_N"/>
    <property type="match status" value="1"/>
</dbReference>
<dbReference type="PIRSF" id="PIRSF003095">
    <property type="entry name" value="Trigger_factor"/>
    <property type="match status" value="1"/>
</dbReference>
<dbReference type="SUPFAM" id="SSF54534">
    <property type="entry name" value="FKBP-like"/>
    <property type="match status" value="1"/>
</dbReference>
<dbReference type="SUPFAM" id="SSF109998">
    <property type="entry name" value="Triger factor/SurA peptide-binding domain-like"/>
    <property type="match status" value="1"/>
</dbReference>
<dbReference type="SUPFAM" id="SSF102735">
    <property type="entry name" value="Trigger factor ribosome-binding domain"/>
    <property type="match status" value="1"/>
</dbReference>
<dbReference type="PROSITE" id="PS50059">
    <property type="entry name" value="FKBP_PPIASE"/>
    <property type="match status" value="1"/>
</dbReference>
<comment type="function">
    <text evidence="1">Involved in protein export. Acts as a chaperone by maintaining the newly synthesized protein in an open conformation. Functions as a peptidyl-prolyl cis-trans isomerase.</text>
</comment>
<comment type="catalytic activity">
    <reaction evidence="1">
        <text>[protein]-peptidylproline (omega=180) = [protein]-peptidylproline (omega=0)</text>
        <dbReference type="Rhea" id="RHEA:16237"/>
        <dbReference type="Rhea" id="RHEA-COMP:10747"/>
        <dbReference type="Rhea" id="RHEA-COMP:10748"/>
        <dbReference type="ChEBI" id="CHEBI:83833"/>
        <dbReference type="ChEBI" id="CHEBI:83834"/>
        <dbReference type="EC" id="5.2.1.8"/>
    </reaction>
</comment>
<comment type="subcellular location">
    <subcellularLocation>
        <location>Cytoplasm</location>
    </subcellularLocation>
    <text evidence="1">About half TF is bound to the ribosome near the polypeptide exit tunnel while the other half is free in the cytoplasm.</text>
</comment>
<comment type="domain">
    <text evidence="1">Consists of 3 domains; the N-terminus binds the ribosome, the middle domain has PPIase activity, while the C-terminus has intrinsic chaperone activity on its own.</text>
</comment>
<comment type="similarity">
    <text evidence="1">Belongs to the FKBP-type PPIase family. Tig subfamily.</text>
</comment>
<keyword id="KW-0131">Cell cycle</keyword>
<keyword id="KW-0132">Cell division</keyword>
<keyword id="KW-0143">Chaperone</keyword>
<keyword id="KW-0963">Cytoplasm</keyword>
<keyword id="KW-0413">Isomerase</keyword>
<keyword id="KW-1185">Reference proteome</keyword>
<keyword id="KW-0697">Rotamase</keyword>
<proteinExistence type="inferred from homology"/>
<reference key="1">
    <citation type="submission" date="2006-05" db="EMBL/GenBank/DDBJ databases">
        <authorList>
            <consortium name="Genoscope"/>
        </authorList>
    </citation>
    <scope>NUCLEOTIDE SEQUENCE [LARGE SCALE GENOMIC DNA]</scope>
    <source>
        <strain>RCC307</strain>
    </source>
</reference>
<feature type="chain" id="PRO_0000322452" description="Trigger factor">
    <location>
        <begin position="1"/>
        <end position="491"/>
    </location>
</feature>
<feature type="domain" description="PPIase FKBP-type" evidence="1">
    <location>
        <begin position="173"/>
        <end position="260"/>
    </location>
</feature>
<feature type="region of interest" description="Disordered" evidence="2">
    <location>
        <begin position="435"/>
        <end position="491"/>
    </location>
</feature>
<feature type="compositionally biased region" description="Low complexity" evidence="2">
    <location>
        <begin position="463"/>
        <end position="475"/>
    </location>
</feature>
<accession>A5GQ11</accession>
<name>TIG_SYNR3</name>
<organism>
    <name type="scientific">Synechococcus sp. (strain RCC307)</name>
    <dbReference type="NCBI Taxonomy" id="316278"/>
    <lineage>
        <taxon>Bacteria</taxon>
        <taxon>Bacillati</taxon>
        <taxon>Cyanobacteriota</taxon>
        <taxon>Cyanophyceae</taxon>
        <taxon>Synechococcales</taxon>
        <taxon>Synechococcaceae</taxon>
        <taxon>Synechococcus</taxon>
    </lineage>
</organism>
<protein>
    <recommendedName>
        <fullName evidence="1">Trigger factor</fullName>
        <shortName evidence="1">TF</shortName>
        <ecNumber evidence="1">5.2.1.8</ecNumber>
    </recommendedName>
    <alternativeName>
        <fullName evidence="1">PPIase</fullName>
    </alternativeName>
</protein>
<gene>
    <name evidence="1" type="primary">tig</name>
    <name type="ordered locus">SynRCC307_0067</name>
</gene>
<evidence type="ECO:0000255" key="1">
    <source>
        <dbReference type="HAMAP-Rule" id="MF_00303"/>
    </source>
</evidence>
<evidence type="ECO:0000256" key="2">
    <source>
        <dbReference type="SAM" id="MobiDB-lite"/>
    </source>
</evidence>